<organism>
    <name type="scientific">Pseudomonas fluorescens (strain SBW25)</name>
    <dbReference type="NCBI Taxonomy" id="216595"/>
    <lineage>
        <taxon>Bacteria</taxon>
        <taxon>Pseudomonadati</taxon>
        <taxon>Pseudomonadota</taxon>
        <taxon>Gammaproteobacteria</taxon>
        <taxon>Pseudomonadales</taxon>
        <taxon>Pseudomonadaceae</taxon>
        <taxon>Pseudomonas</taxon>
    </lineage>
</organism>
<gene>
    <name evidence="1" type="primary">argH</name>
    <name type="ordered locus">PFLU_5936</name>
</gene>
<protein>
    <recommendedName>
        <fullName evidence="1">Argininosuccinate lyase</fullName>
        <shortName evidence="1">ASAL</shortName>
        <ecNumber evidence="1">4.3.2.1</ecNumber>
    </recommendedName>
    <alternativeName>
        <fullName evidence="1">Arginosuccinase</fullName>
    </alternativeName>
</protein>
<accession>C3K426</accession>
<reference key="1">
    <citation type="journal article" date="2009" name="Genome Biol.">
        <title>Genomic and genetic analyses of diversity and plant interactions of Pseudomonas fluorescens.</title>
        <authorList>
            <person name="Silby M.W."/>
            <person name="Cerdeno-Tarraga A.M."/>
            <person name="Vernikos G.S."/>
            <person name="Giddens S.R."/>
            <person name="Jackson R.W."/>
            <person name="Preston G.M."/>
            <person name="Zhang X.-X."/>
            <person name="Moon C.D."/>
            <person name="Gehrig S.M."/>
            <person name="Godfrey S.A.C."/>
            <person name="Knight C.G."/>
            <person name="Malone J.G."/>
            <person name="Robinson Z."/>
            <person name="Spiers A.J."/>
            <person name="Harris S."/>
            <person name="Challis G.L."/>
            <person name="Yaxley A.M."/>
            <person name="Harris D."/>
            <person name="Seeger K."/>
            <person name="Murphy L."/>
            <person name="Rutter S."/>
            <person name="Squares R."/>
            <person name="Quail M.A."/>
            <person name="Saunders E."/>
            <person name="Mavromatis K."/>
            <person name="Brettin T.S."/>
            <person name="Bentley S.D."/>
            <person name="Hothersall J."/>
            <person name="Stephens E."/>
            <person name="Thomas C.M."/>
            <person name="Parkhill J."/>
            <person name="Levy S.B."/>
            <person name="Rainey P.B."/>
            <person name="Thomson N.R."/>
        </authorList>
    </citation>
    <scope>NUCLEOTIDE SEQUENCE [LARGE SCALE GENOMIC DNA]</scope>
    <source>
        <strain>SBW25</strain>
    </source>
</reference>
<name>ARLY_PSEFS</name>
<sequence>MSTDKTNQSWGGRFSEPVDAFVARFTASVTFDQRLYRHDIMGSIAHATMLAKVGVLTDAERDSIIDGLNTIRGEIEAGTFDWRVDLEDVHMNIEARLTDRIGVTGKKLHTGRSRNDQVATDIRLWLRDEIDLILGEITRLQKGLLEQAERESDTIMPGFTHLQTAQPVTFGHHLLAWFEMLSRDYERLVDCRKRANRMPLGSAALAGTTYPIDREYTAQLLGFDAVGGNSLDGVSDRDFAIEFCAAASIAMMHLSRFSEELVLWTSAQFQFIDLPDRFCTGSSIMPQKKNPDVPELVRGKSGRVFGALMGLLTLMKGQPLAYNKDNQEDKEPLFDAADTLRDSLRAFADMIPAIKPKHAIMREAALRGFSTATDLADYLVRRGLPFRDCHEIVGHAVKYGVDTGKDLAEMSLEELRQFSDQIEQDVFAVLTLEGSVNARNHVGGTAPAQVKAAVVRGLTLLASR</sequence>
<proteinExistence type="inferred from homology"/>
<evidence type="ECO:0000255" key="1">
    <source>
        <dbReference type="HAMAP-Rule" id="MF_00006"/>
    </source>
</evidence>
<keyword id="KW-0028">Amino-acid biosynthesis</keyword>
<keyword id="KW-0055">Arginine biosynthesis</keyword>
<keyword id="KW-0963">Cytoplasm</keyword>
<keyword id="KW-0456">Lyase</keyword>
<comment type="catalytic activity">
    <reaction evidence="1">
        <text>2-(N(omega)-L-arginino)succinate = fumarate + L-arginine</text>
        <dbReference type="Rhea" id="RHEA:24020"/>
        <dbReference type="ChEBI" id="CHEBI:29806"/>
        <dbReference type="ChEBI" id="CHEBI:32682"/>
        <dbReference type="ChEBI" id="CHEBI:57472"/>
        <dbReference type="EC" id="4.3.2.1"/>
    </reaction>
</comment>
<comment type="pathway">
    <text evidence="1">Amino-acid biosynthesis; L-arginine biosynthesis; L-arginine from L-ornithine and carbamoyl phosphate: step 3/3.</text>
</comment>
<comment type="subcellular location">
    <subcellularLocation>
        <location evidence="1">Cytoplasm</location>
    </subcellularLocation>
</comment>
<comment type="similarity">
    <text evidence="1">Belongs to the lyase 1 family. Argininosuccinate lyase subfamily.</text>
</comment>
<dbReference type="EC" id="4.3.2.1" evidence="1"/>
<dbReference type="EMBL" id="AM181176">
    <property type="protein sequence ID" value="CAY53427.1"/>
    <property type="molecule type" value="Genomic_DNA"/>
</dbReference>
<dbReference type="RefSeq" id="WP_015886494.1">
    <property type="nucleotide sequence ID" value="NC_012660.1"/>
</dbReference>
<dbReference type="SMR" id="C3K426"/>
<dbReference type="STRING" id="294.SRM1_05628"/>
<dbReference type="PATRIC" id="fig|216595.4.peg.6058"/>
<dbReference type="eggNOG" id="COG0165">
    <property type="taxonomic scope" value="Bacteria"/>
</dbReference>
<dbReference type="HOGENOM" id="CLU_027272_2_3_6"/>
<dbReference type="OrthoDB" id="9769623at2"/>
<dbReference type="UniPathway" id="UPA00068">
    <property type="reaction ID" value="UER00114"/>
</dbReference>
<dbReference type="GO" id="GO:0005829">
    <property type="term" value="C:cytosol"/>
    <property type="evidence" value="ECO:0007669"/>
    <property type="project" value="TreeGrafter"/>
</dbReference>
<dbReference type="GO" id="GO:0004056">
    <property type="term" value="F:argininosuccinate lyase activity"/>
    <property type="evidence" value="ECO:0007669"/>
    <property type="project" value="UniProtKB-UniRule"/>
</dbReference>
<dbReference type="GO" id="GO:0042450">
    <property type="term" value="P:arginine biosynthetic process via ornithine"/>
    <property type="evidence" value="ECO:0007669"/>
    <property type="project" value="InterPro"/>
</dbReference>
<dbReference type="GO" id="GO:0006526">
    <property type="term" value="P:L-arginine biosynthetic process"/>
    <property type="evidence" value="ECO:0007669"/>
    <property type="project" value="UniProtKB-UniRule"/>
</dbReference>
<dbReference type="CDD" id="cd01359">
    <property type="entry name" value="Argininosuccinate_lyase"/>
    <property type="match status" value="1"/>
</dbReference>
<dbReference type="FunFam" id="1.10.275.10:FF:000002">
    <property type="entry name" value="Argininosuccinate lyase"/>
    <property type="match status" value="1"/>
</dbReference>
<dbReference type="FunFam" id="1.10.40.30:FF:000001">
    <property type="entry name" value="Argininosuccinate lyase"/>
    <property type="match status" value="1"/>
</dbReference>
<dbReference type="FunFam" id="1.20.200.10:FF:000015">
    <property type="entry name" value="argininosuccinate lyase isoform X2"/>
    <property type="match status" value="1"/>
</dbReference>
<dbReference type="Gene3D" id="1.10.40.30">
    <property type="entry name" value="Fumarase/aspartase (C-terminal domain)"/>
    <property type="match status" value="1"/>
</dbReference>
<dbReference type="Gene3D" id="1.20.200.10">
    <property type="entry name" value="Fumarase/aspartase (Central domain)"/>
    <property type="match status" value="1"/>
</dbReference>
<dbReference type="Gene3D" id="1.10.275.10">
    <property type="entry name" value="Fumarase/aspartase (N-terminal domain)"/>
    <property type="match status" value="1"/>
</dbReference>
<dbReference type="HAMAP" id="MF_00006">
    <property type="entry name" value="Arg_succ_lyase"/>
    <property type="match status" value="1"/>
</dbReference>
<dbReference type="InterPro" id="IPR029419">
    <property type="entry name" value="Arg_succ_lyase_C"/>
</dbReference>
<dbReference type="InterPro" id="IPR009049">
    <property type="entry name" value="Argininosuccinate_lyase"/>
</dbReference>
<dbReference type="InterPro" id="IPR024083">
    <property type="entry name" value="Fumarase/histidase_N"/>
</dbReference>
<dbReference type="InterPro" id="IPR020557">
    <property type="entry name" value="Fumarate_lyase_CS"/>
</dbReference>
<dbReference type="InterPro" id="IPR000362">
    <property type="entry name" value="Fumarate_lyase_fam"/>
</dbReference>
<dbReference type="InterPro" id="IPR022761">
    <property type="entry name" value="Fumarate_lyase_N"/>
</dbReference>
<dbReference type="InterPro" id="IPR008948">
    <property type="entry name" value="L-Aspartase-like"/>
</dbReference>
<dbReference type="NCBIfam" id="TIGR00838">
    <property type="entry name" value="argH"/>
    <property type="match status" value="1"/>
</dbReference>
<dbReference type="PANTHER" id="PTHR43814">
    <property type="entry name" value="ARGININOSUCCINATE LYASE"/>
    <property type="match status" value="1"/>
</dbReference>
<dbReference type="PANTHER" id="PTHR43814:SF1">
    <property type="entry name" value="ARGININOSUCCINATE LYASE"/>
    <property type="match status" value="1"/>
</dbReference>
<dbReference type="Pfam" id="PF14698">
    <property type="entry name" value="ASL_C2"/>
    <property type="match status" value="1"/>
</dbReference>
<dbReference type="Pfam" id="PF00206">
    <property type="entry name" value="Lyase_1"/>
    <property type="match status" value="1"/>
</dbReference>
<dbReference type="PRINTS" id="PR00145">
    <property type="entry name" value="ARGSUCLYASE"/>
</dbReference>
<dbReference type="PRINTS" id="PR00149">
    <property type="entry name" value="FUMRATELYASE"/>
</dbReference>
<dbReference type="SUPFAM" id="SSF48557">
    <property type="entry name" value="L-aspartase-like"/>
    <property type="match status" value="1"/>
</dbReference>
<dbReference type="PROSITE" id="PS00163">
    <property type="entry name" value="FUMARATE_LYASES"/>
    <property type="match status" value="1"/>
</dbReference>
<feature type="chain" id="PRO_1000201705" description="Argininosuccinate lyase">
    <location>
        <begin position="1"/>
        <end position="464"/>
    </location>
</feature>